<proteinExistence type="inferred from homology"/>
<name>MATK_OENBI</name>
<protein>
    <recommendedName>
        <fullName evidence="1">Maturase K</fullName>
    </recommendedName>
    <alternativeName>
        <fullName evidence="1">Intron maturase</fullName>
    </alternativeName>
</protein>
<geneLocation type="chloroplast"/>
<keyword id="KW-0150">Chloroplast</keyword>
<keyword id="KW-0507">mRNA processing</keyword>
<keyword id="KW-0934">Plastid</keyword>
<keyword id="KW-0694">RNA-binding</keyword>
<keyword id="KW-0819">tRNA processing</keyword>
<reference key="1">
    <citation type="journal article" date="2008" name="Nucleic Acids Res.">
        <title>The complete nucleotide sequences of the five genetically distinct plastid genomes of Oenothera, subsection Oenothera: I. Sequence evaluation and plastome evolution.</title>
        <authorList>
            <person name="Greiner S."/>
            <person name="Wang X."/>
            <person name="Rauwolf U."/>
            <person name="Silber M.V."/>
            <person name="Mayer K."/>
            <person name="Meurer J."/>
            <person name="Haberer G."/>
            <person name="Herrmann R.G."/>
        </authorList>
    </citation>
    <scope>NUCLEOTIDE SEQUENCE [LARGE SCALE GENOMIC DNA]</scope>
    <source>
        <strain>cv. Suaveolens Grado</strain>
    </source>
</reference>
<evidence type="ECO:0000255" key="1">
    <source>
        <dbReference type="HAMAP-Rule" id="MF_01390"/>
    </source>
</evidence>
<sequence length="512" mass="60019">MEEFPGYFELDRSRQHDFLYPLIFRESIYALAHDHGLNRNRSTLFENEVDYDKKYSLIIVKRLITRMYQRNHLIISANGSVQNPFWGHNQNLYSKILSEGFAVIVEIPFSLRVLSSFERKEKDIAKSPTLRSIHSIFPFLEDQFSHLDYLSHVLIPYPIHLEIAVQTLRYWVKDASSLHLLRIFLHEYWNSFSTPKKHITLFLKGNSRFFLFLYNSYVCEYESIFLFIRNQSSHFQSTSSGVFFERILFYVKIDHLVEVFVGTDFLDIRSFFKDPNMHYVRYQGKSILASKDTPLLMNKWKYYLVNLWQYHFSVWSQPGRININQLGKYSLDFLGYFSNVQLKSSVVRNQTLENSFLINNAMKKLETTVPILPLIGSLSRAKFCNALGHPISKPTRNDSSDSDIIDRFVRICRNLSHYHSGSSKKKSLYRIKYILRLSCVKTLARKHKSSVRAFLKRLGSELGDEFLTEEGVVLAVIFPKASGRLYRGRIWYLDIPCINDRVGDAEGSIFTK</sequence>
<gene>
    <name evidence="1" type="primary">matK</name>
</gene>
<dbReference type="EMBL" id="EU262889">
    <property type="protein sequence ID" value="ABW98853.1"/>
    <property type="molecule type" value="Genomic_DNA"/>
</dbReference>
<dbReference type="RefSeq" id="YP_001687348.1">
    <property type="nucleotide sequence ID" value="NC_010361.1"/>
</dbReference>
<dbReference type="GeneID" id="5952068"/>
<dbReference type="GO" id="GO:0009507">
    <property type="term" value="C:chloroplast"/>
    <property type="evidence" value="ECO:0007669"/>
    <property type="project" value="UniProtKB-SubCell"/>
</dbReference>
<dbReference type="GO" id="GO:0003723">
    <property type="term" value="F:RNA binding"/>
    <property type="evidence" value="ECO:0007669"/>
    <property type="project" value="UniProtKB-KW"/>
</dbReference>
<dbReference type="GO" id="GO:0006397">
    <property type="term" value="P:mRNA processing"/>
    <property type="evidence" value="ECO:0007669"/>
    <property type="project" value="UniProtKB-KW"/>
</dbReference>
<dbReference type="GO" id="GO:0008380">
    <property type="term" value="P:RNA splicing"/>
    <property type="evidence" value="ECO:0007669"/>
    <property type="project" value="UniProtKB-UniRule"/>
</dbReference>
<dbReference type="GO" id="GO:0008033">
    <property type="term" value="P:tRNA processing"/>
    <property type="evidence" value="ECO:0007669"/>
    <property type="project" value="UniProtKB-KW"/>
</dbReference>
<dbReference type="HAMAP" id="MF_01390">
    <property type="entry name" value="MatK"/>
    <property type="match status" value="1"/>
</dbReference>
<dbReference type="InterPro" id="IPR024937">
    <property type="entry name" value="Domain_X"/>
</dbReference>
<dbReference type="InterPro" id="IPR002866">
    <property type="entry name" value="Maturase_MatK"/>
</dbReference>
<dbReference type="InterPro" id="IPR024942">
    <property type="entry name" value="Maturase_MatK_N"/>
</dbReference>
<dbReference type="PANTHER" id="PTHR34811">
    <property type="entry name" value="MATURASE K"/>
    <property type="match status" value="1"/>
</dbReference>
<dbReference type="PANTHER" id="PTHR34811:SF1">
    <property type="entry name" value="MATURASE K"/>
    <property type="match status" value="1"/>
</dbReference>
<dbReference type="Pfam" id="PF01348">
    <property type="entry name" value="Intron_maturas2"/>
    <property type="match status" value="1"/>
</dbReference>
<dbReference type="Pfam" id="PF01824">
    <property type="entry name" value="MatK_N"/>
    <property type="match status" value="1"/>
</dbReference>
<comment type="function">
    <text evidence="1">Usually encoded in the trnK tRNA gene intron. Probably assists in splicing its own and other chloroplast group II introns.</text>
</comment>
<comment type="subcellular location">
    <subcellularLocation>
        <location>Plastid</location>
        <location>Chloroplast</location>
    </subcellularLocation>
</comment>
<comment type="similarity">
    <text evidence="1">Belongs to the intron maturase 2 family. MatK subfamily.</text>
</comment>
<organism>
    <name type="scientific">Oenothera biennis</name>
    <name type="common">German evening primrose</name>
    <name type="synonym">Onagra biennis</name>
    <dbReference type="NCBI Taxonomy" id="3942"/>
    <lineage>
        <taxon>Eukaryota</taxon>
        <taxon>Viridiplantae</taxon>
        <taxon>Streptophyta</taxon>
        <taxon>Embryophyta</taxon>
        <taxon>Tracheophyta</taxon>
        <taxon>Spermatophyta</taxon>
        <taxon>Magnoliopsida</taxon>
        <taxon>eudicotyledons</taxon>
        <taxon>Gunneridae</taxon>
        <taxon>Pentapetalae</taxon>
        <taxon>rosids</taxon>
        <taxon>malvids</taxon>
        <taxon>Myrtales</taxon>
        <taxon>Onagraceae</taxon>
        <taxon>Onagroideae</taxon>
        <taxon>Onagreae</taxon>
        <taxon>Oenothera</taxon>
    </lineage>
</organism>
<feature type="chain" id="PRO_0000355952" description="Maturase K">
    <location>
        <begin position="1"/>
        <end position="512"/>
    </location>
</feature>
<accession>B0Z4U1</accession>